<dbReference type="EMBL" id="M32065">
    <property type="protein sequence ID" value="AAA23037.1"/>
    <property type="molecule type" value="Genomic_DNA"/>
</dbReference>
<dbReference type="EMBL" id="M69228">
    <property type="protein sequence ID" value="AAA23039.1"/>
    <property type="molecule type" value="Genomic_DNA"/>
</dbReference>
<dbReference type="EMBL" id="M30946">
    <property type="protein sequence ID" value="AAA23043.1"/>
    <property type="molecule type" value="Genomic_DNA"/>
</dbReference>
<dbReference type="EMBL" id="AE005673">
    <property type="protein sequence ID" value="AAK22893.1"/>
    <property type="molecule type" value="Genomic_DNA"/>
</dbReference>
<dbReference type="PIR" id="A35097">
    <property type="entry name" value="A35097"/>
</dbReference>
<dbReference type="RefSeq" id="NP_419725.1">
    <property type="nucleotide sequence ID" value="NC_002696.2"/>
</dbReference>
<dbReference type="RefSeq" id="WP_010918793.1">
    <property type="nucleotide sequence ID" value="NC_002696.2"/>
</dbReference>
<dbReference type="SMR" id="P17899"/>
<dbReference type="STRING" id="190650.CC_0909"/>
<dbReference type="EnsemblBacteria" id="AAK22893">
    <property type="protein sequence ID" value="AAK22893"/>
    <property type="gene ID" value="CC_0909"/>
</dbReference>
<dbReference type="KEGG" id="ccr:CC_0909"/>
<dbReference type="PATRIC" id="fig|190650.5.peg.922"/>
<dbReference type="eggNOG" id="COG2204">
    <property type="taxonomic scope" value="Bacteria"/>
</dbReference>
<dbReference type="HOGENOM" id="CLU_000445_0_2_5"/>
<dbReference type="BioCyc" id="CAULO:CC0909-MONOMER"/>
<dbReference type="Proteomes" id="UP000001816">
    <property type="component" value="Chromosome"/>
</dbReference>
<dbReference type="GO" id="GO:0005737">
    <property type="term" value="C:cytoplasm"/>
    <property type="evidence" value="ECO:0007669"/>
    <property type="project" value="UniProtKB-SubCell"/>
</dbReference>
<dbReference type="GO" id="GO:0005524">
    <property type="term" value="F:ATP binding"/>
    <property type="evidence" value="ECO:0007669"/>
    <property type="project" value="UniProtKB-KW"/>
</dbReference>
<dbReference type="GO" id="GO:0016887">
    <property type="term" value="F:ATP hydrolysis activity"/>
    <property type="evidence" value="ECO:0007669"/>
    <property type="project" value="InterPro"/>
</dbReference>
<dbReference type="GO" id="GO:0043565">
    <property type="term" value="F:sequence-specific DNA binding"/>
    <property type="evidence" value="ECO:0007669"/>
    <property type="project" value="InterPro"/>
</dbReference>
<dbReference type="GO" id="GO:0044781">
    <property type="term" value="P:bacterial-type flagellum organization"/>
    <property type="evidence" value="ECO:0007669"/>
    <property type="project" value="UniProtKB-KW"/>
</dbReference>
<dbReference type="GO" id="GO:0000160">
    <property type="term" value="P:phosphorelay signal transduction system"/>
    <property type="evidence" value="ECO:0007669"/>
    <property type="project" value="UniProtKB-KW"/>
</dbReference>
<dbReference type="GO" id="GO:0006355">
    <property type="term" value="P:regulation of DNA-templated transcription"/>
    <property type="evidence" value="ECO:0007669"/>
    <property type="project" value="InterPro"/>
</dbReference>
<dbReference type="CDD" id="cd00009">
    <property type="entry name" value="AAA"/>
    <property type="match status" value="1"/>
</dbReference>
<dbReference type="FunFam" id="3.40.50.300:FF:000006">
    <property type="entry name" value="DNA-binding transcriptional regulator NtrC"/>
    <property type="match status" value="1"/>
</dbReference>
<dbReference type="Gene3D" id="1.10.8.60">
    <property type="match status" value="1"/>
</dbReference>
<dbReference type="Gene3D" id="3.40.50.2300">
    <property type="match status" value="1"/>
</dbReference>
<dbReference type="Gene3D" id="1.10.10.60">
    <property type="entry name" value="Homeodomain-like"/>
    <property type="match status" value="1"/>
</dbReference>
<dbReference type="Gene3D" id="3.40.50.300">
    <property type="entry name" value="P-loop containing nucleotide triphosphate hydrolases"/>
    <property type="match status" value="1"/>
</dbReference>
<dbReference type="InterPro" id="IPR003593">
    <property type="entry name" value="AAA+_ATPase"/>
</dbReference>
<dbReference type="InterPro" id="IPR011006">
    <property type="entry name" value="CheY-like_superfamily"/>
</dbReference>
<dbReference type="InterPro" id="IPR009057">
    <property type="entry name" value="Homeodomain-like_sf"/>
</dbReference>
<dbReference type="InterPro" id="IPR002197">
    <property type="entry name" value="HTH_Fis"/>
</dbReference>
<dbReference type="InterPro" id="IPR027417">
    <property type="entry name" value="P-loop_NTPase"/>
</dbReference>
<dbReference type="InterPro" id="IPR001789">
    <property type="entry name" value="Sig_transdc_resp-reg_receiver"/>
</dbReference>
<dbReference type="InterPro" id="IPR002078">
    <property type="entry name" value="Sigma_54_int"/>
</dbReference>
<dbReference type="InterPro" id="IPR025662">
    <property type="entry name" value="Sigma_54_int_dom_ATP-bd_1"/>
</dbReference>
<dbReference type="InterPro" id="IPR025943">
    <property type="entry name" value="Sigma_54_int_dom_ATP-bd_2"/>
</dbReference>
<dbReference type="InterPro" id="IPR025944">
    <property type="entry name" value="Sigma_54_int_dom_CS"/>
</dbReference>
<dbReference type="PANTHER" id="PTHR32071">
    <property type="entry name" value="TRANSCRIPTIONAL REGULATORY PROTEIN"/>
    <property type="match status" value="1"/>
</dbReference>
<dbReference type="PANTHER" id="PTHR32071:SF21">
    <property type="entry name" value="TRANSCRIPTIONAL REGULATORY PROTEIN FLGR"/>
    <property type="match status" value="1"/>
</dbReference>
<dbReference type="Pfam" id="PF02954">
    <property type="entry name" value="HTH_8"/>
    <property type="match status" value="1"/>
</dbReference>
<dbReference type="Pfam" id="PF00158">
    <property type="entry name" value="Sigma54_activat"/>
    <property type="match status" value="1"/>
</dbReference>
<dbReference type="PRINTS" id="PR01590">
    <property type="entry name" value="HTHFIS"/>
</dbReference>
<dbReference type="SMART" id="SM00382">
    <property type="entry name" value="AAA"/>
    <property type="match status" value="1"/>
</dbReference>
<dbReference type="SMART" id="SM00448">
    <property type="entry name" value="REC"/>
    <property type="match status" value="1"/>
</dbReference>
<dbReference type="SUPFAM" id="SSF52172">
    <property type="entry name" value="CheY-like"/>
    <property type="match status" value="1"/>
</dbReference>
<dbReference type="SUPFAM" id="SSF46689">
    <property type="entry name" value="Homeodomain-like"/>
    <property type="match status" value="1"/>
</dbReference>
<dbReference type="SUPFAM" id="SSF52540">
    <property type="entry name" value="P-loop containing nucleoside triphosphate hydrolases"/>
    <property type="match status" value="1"/>
</dbReference>
<dbReference type="PROSITE" id="PS50110">
    <property type="entry name" value="RESPONSE_REGULATORY"/>
    <property type="match status" value="1"/>
</dbReference>
<dbReference type="PROSITE" id="PS00675">
    <property type="entry name" value="SIGMA54_INTERACT_1"/>
    <property type="match status" value="1"/>
</dbReference>
<dbReference type="PROSITE" id="PS00676">
    <property type="entry name" value="SIGMA54_INTERACT_2"/>
    <property type="match status" value="1"/>
</dbReference>
<dbReference type="PROSITE" id="PS00688">
    <property type="entry name" value="SIGMA54_INTERACT_3"/>
    <property type="match status" value="1"/>
</dbReference>
<dbReference type="PROSITE" id="PS50045">
    <property type="entry name" value="SIGMA54_INTERACT_4"/>
    <property type="match status" value="1"/>
</dbReference>
<keyword id="KW-0010">Activator</keyword>
<keyword id="KW-0067">ATP-binding</keyword>
<keyword id="KW-1005">Bacterial flagellum biogenesis</keyword>
<keyword id="KW-0963">Cytoplasm</keyword>
<keyword id="KW-0238">DNA-binding</keyword>
<keyword id="KW-0547">Nucleotide-binding</keyword>
<keyword id="KW-0597">Phosphoprotein</keyword>
<keyword id="KW-1185">Reference proteome</keyword>
<keyword id="KW-0804">Transcription</keyword>
<keyword id="KW-0805">Transcription regulation</keyword>
<keyword id="KW-0902">Two-component regulatory system</keyword>
<feature type="chain" id="PRO_0000081103" description="Transcriptional regulatory protein FlbD">
    <location>
        <begin position="1"/>
        <end position="455"/>
    </location>
</feature>
<feature type="domain" description="Response regulatory" evidence="2">
    <location>
        <begin position="2"/>
        <end position="114"/>
    </location>
</feature>
<feature type="domain" description="Sigma-54 factor interaction" evidence="3">
    <location>
        <begin position="120"/>
        <end position="349"/>
    </location>
</feature>
<feature type="DNA-binding region" description="H-T-H motif" evidence="1">
    <location>
        <begin position="416"/>
        <end position="435"/>
    </location>
</feature>
<feature type="binding site" evidence="3">
    <location>
        <begin position="148"/>
        <end position="155"/>
    </location>
    <ligand>
        <name>ATP</name>
        <dbReference type="ChEBI" id="CHEBI:30616"/>
    </ligand>
</feature>
<feature type="binding site" evidence="3">
    <location>
        <begin position="211"/>
        <end position="220"/>
    </location>
    <ligand>
        <name>ATP</name>
        <dbReference type="ChEBI" id="CHEBI:30616"/>
    </ligand>
</feature>
<evidence type="ECO:0000250" key="1"/>
<evidence type="ECO:0000255" key="2">
    <source>
        <dbReference type="PROSITE-ProRule" id="PRU00169"/>
    </source>
</evidence>
<evidence type="ECO:0000255" key="3">
    <source>
        <dbReference type="PROSITE-ProRule" id="PRU00193"/>
    </source>
</evidence>
<evidence type="ECO:0000305" key="4"/>
<comment type="function">
    <text>Activation of sigma-54-dependent flagellar gene promoters and strong negative autoregulatory effects on its own promoter. The synthesis and function of FlbD in C.crescentus is controlled by an internal cell-cycle clock.</text>
</comment>
<comment type="subcellular location">
    <subcellularLocation>
        <location evidence="4">Cytoplasm</location>
    </subcellularLocation>
</comment>
<comment type="miscellaneous">
    <text>FldB is transcribed during a very brief time in the cell cycle just before the periodic expression of FlbG and its other target genes.</text>
</comment>
<gene>
    <name type="primary">flbD</name>
    <name type="synonym">ftrC</name>
    <name type="ordered locus">CC_0909</name>
</gene>
<protein>
    <recommendedName>
        <fullName>Transcriptional regulatory protein FlbD</fullName>
    </recommendedName>
</protein>
<accession>P17899</accession>
<reference key="1">
    <citation type="journal article" date="1990" name="Proc. Natl. Acad. Sci. U.S.A.">
        <title>FlbD of Caulobacter crescentus is a homologue of the NtrC (NRI) protein and activates sigma 54-dependent flagellar gene promoters.</title>
        <authorList>
            <person name="Ramakrishnan G."/>
            <person name="Newton A."/>
        </authorList>
    </citation>
    <scope>NUCLEOTIDE SEQUENCE [GENOMIC DNA]</scope>
    <source>
        <strain>ATCC 19089 / CIP 103742 / CB 15</strain>
    </source>
</reference>
<reference key="2">
    <citation type="submission" date="1990-06" db="EMBL/GenBank/DDBJ databases">
        <authorList>
            <person name="van Way S.M."/>
            <person name="Mullin D.A."/>
        </authorList>
    </citation>
    <scope>NUCLEOTIDE SEQUENCE [GENOMIC DNA]</scope>
</reference>
<reference key="3">
    <citation type="journal article" date="2001" name="Proc. Natl. Acad. Sci. U.S.A.">
        <title>Complete genome sequence of Caulobacter crescentus.</title>
        <authorList>
            <person name="Nierman W.C."/>
            <person name="Feldblyum T.V."/>
            <person name="Laub M.T."/>
            <person name="Paulsen I.T."/>
            <person name="Nelson K.E."/>
            <person name="Eisen J.A."/>
            <person name="Heidelberg J.F."/>
            <person name="Alley M.R.K."/>
            <person name="Ohta N."/>
            <person name="Maddock J.R."/>
            <person name="Potocka I."/>
            <person name="Nelson W.C."/>
            <person name="Newton A."/>
            <person name="Stephens C."/>
            <person name="Phadke N.D."/>
            <person name="Ely B."/>
            <person name="DeBoy R.T."/>
            <person name="Dodson R.J."/>
            <person name="Durkin A.S."/>
            <person name="Gwinn M.L."/>
            <person name="Haft D.H."/>
            <person name="Kolonay J.F."/>
            <person name="Smit J."/>
            <person name="Craven M.B."/>
            <person name="Khouri H.M."/>
            <person name="Shetty J."/>
            <person name="Berry K.J."/>
            <person name="Utterback T.R."/>
            <person name="Tran K."/>
            <person name="Wolf A.M."/>
            <person name="Vamathevan J.J."/>
            <person name="Ermolaeva M.D."/>
            <person name="White O."/>
            <person name="Salzberg S.L."/>
            <person name="Venter J.C."/>
            <person name="Shapiro L."/>
            <person name="Fraser C.M."/>
        </authorList>
    </citation>
    <scope>NUCLEOTIDE SEQUENCE [LARGE SCALE GENOMIC DNA]</scope>
    <source>
        <strain>ATCC 19089 / CIP 103742 / CB 15</strain>
    </source>
</reference>
<sequence length="455" mass="48764">MRLLVVGKLNGQLSVAVKMAMNAGAKVSHVETTEQATNALRAGQGADLLMVDYVLDIAGLIAANEAERMRVPVVACGVDADPMRAANAIKAGAKEFIPLPPDAELIAAVLAAVTDDEKPMVVRDPAMEQVIKLADQVAPSEASILITGESGSGKEVMARYVHGKSRRAKAPFISVNCAAIPENLLESELFGHEKGAFTGAMARRIGKFEEADGGTLLLDEISEMDVRLQAKLLRAIQEREIDRVGGSKPVKVNIRILATSNRDLAQAVKDGTFREDLLYRLNVVNLRLPPLRERPADVISLCEFFVKKYSAANGIEEKPISAEAKRRLIAHRWPGNVRELENAMHRAVLLSAGPEIEEFAIRLPDGQPMAPAPDVAVARGAQMAADAASRAFVGSTVAEVEQQLIIDTLEHCLGNRTHAANILGISIRTLRNKLKEYSDAGVQVPPPQGGVGAAA</sequence>
<organism>
    <name type="scientific">Caulobacter vibrioides (strain ATCC 19089 / CIP 103742 / CB 15)</name>
    <name type="common">Caulobacter crescentus</name>
    <dbReference type="NCBI Taxonomy" id="190650"/>
    <lineage>
        <taxon>Bacteria</taxon>
        <taxon>Pseudomonadati</taxon>
        <taxon>Pseudomonadota</taxon>
        <taxon>Alphaproteobacteria</taxon>
        <taxon>Caulobacterales</taxon>
        <taxon>Caulobacteraceae</taxon>
        <taxon>Caulobacter</taxon>
    </lineage>
</organism>
<name>FLBD_CAUVC</name>
<proteinExistence type="predicted"/>